<protein>
    <recommendedName>
        <fullName>Uncharacterized protein Mb3814</fullName>
    </recommendedName>
</protein>
<name>Y3814_MYCBO</name>
<reference key="1">
    <citation type="journal article" date="2003" name="Proc. Natl. Acad. Sci. U.S.A.">
        <title>The complete genome sequence of Mycobacterium bovis.</title>
        <authorList>
            <person name="Garnier T."/>
            <person name="Eiglmeier K."/>
            <person name="Camus J.-C."/>
            <person name="Medina N."/>
            <person name="Mansoor H."/>
            <person name="Pryor M."/>
            <person name="Duthoy S."/>
            <person name="Grondin S."/>
            <person name="Lacroix C."/>
            <person name="Monsempe C."/>
            <person name="Simon S."/>
            <person name="Harris B."/>
            <person name="Atkin R."/>
            <person name="Doggett J."/>
            <person name="Mayes R."/>
            <person name="Keating L."/>
            <person name="Wheeler P.R."/>
            <person name="Parkhill J."/>
            <person name="Barrell B.G."/>
            <person name="Cole S.T."/>
            <person name="Gordon S.V."/>
            <person name="Hewinson R.G."/>
        </authorList>
    </citation>
    <scope>NUCLEOTIDE SEQUENCE [LARGE SCALE GENOMIC DNA]</scope>
    <source>
        <strain>ATCC BAA-935 / AF2122/97</strain>
    </source>
</reference>
<reference key="2">
    <citation type="journal article" date="2017" name="Genome Announc.">
        <title>Updated reference genome sequence and annotation of Mycobacterium bovis AF2122/97.</title>
        <authorList>
            <person name="Malone K.M."/>
            <person name="Farrell D."/>
            <person name="Stuber T.P."/>
            <person name="Schubert O.T."/>
            <person name="Aebersold R."/>
            <person name="Robbe-Austerman S."/>
            <person name="Gordon S.V."/>
        </authorList>
    </citation>
    <scope>NUCLEOTIDE SEQUENCE [LARGE SCALE GENOMIC DNA]</scope>
    <scope>GENOME REANNOTATION</scope>
    <source>
        <strain>ATCC BAA-935 / AF2122/97</strain>
    </source>
</reference>
<proteinExistence type="predicted"/>
<sequence>MVTVARRPVCPVTLTPGDPALASVRDLVDAWSAHDALAELVTMFGGAFPQTDHLEARLASLDKFSTAWDYRARARAARALHGEPVRCQDSGGGARWLIPRLDLPAKKRDAIVGLAQQLGLTLESTPQGTTFDHVLVIGTGRHSNLIRARWARELAKGRQVGHIVLAAASRRLLPSEDDAVAVCAPGARTEFELLAAAARDAFGLDVHPAVRYVRQRDDNPHRDSMVWRFAADTNDLGVPITLLEAPSPEPDSSRATSADTFTFTAHTLGMQDSTCLLVTGQPFVPYQNFDALRTLALPFGIQVETVGFGIDRYDGLGELDQQHPAKLLQEVRSTIRAARALLERIEAGERMATDPRR</sequence>
<feature type="chain" id="PRO_0000104149" description="Uncharacterized protein Mb3814">
    <location>
        <begin position="1"/>
        <end position="357"/>
    </location>
</feature>
<organism>
    <name type="scientific">Mycobacterium bovis (strain ATCC BAA-935 / AF2122/97)</name>
    <dbReference type="NCBI Taxonomy" id="233413"/>
    <lineage>
        <taxon>Bacteria</taxon>
        <taxon>Bacillati</taxon>
        <taxon>Actinomycetota</taxon>
        <taxon>Actinomycetes</taxon>
        <taxon>Mycobacteriales</taxon>
        <taxon>Mycobacteriaceae</taxon>
        <taxon>Mycobacterium</taxon>
        <taxon>Mycobacterium tuberculosis complex</taxon>
    </lineage>
</organism>
<keyword id="KW-1185">Reference proteome</keyword>
<dbReference type="EMBL" id="LT708304">
    <property type="protein sequence ID" value="SIU02443.1"/>
    <property type="molecule type" value="Genomic_DNA"/>
</dbReference>
<dbReference type="RefSeq" id="NP_857451.1">
    <property type="nucleotide sequence ID" value="NC_002945.3"/>
</dbReference>
<dbReference type="RefSeq" id="WP_003420615.1">
    <property type="nucleotide sequence ID" value="NC_002945.4"/>
</dbReference>
<dbReference type="KEGG" id="mbo:BQ2027_MB3814"/>
<dbReference type="PATRIC" id="fig|233413.5.peg.4171"/>
<dbReference type="Proteomes" id="UP000001419">
    <property type="component" value="Chromosome"/>
</dbReference>
<gene>
    <name type="ordered locus">BQ2027_MB3814</name>
</gene>
<accession>P65094</accession>
<accession>A0A1R3Y588</accession>
<accession>P72051</accession>
<accession>X2BQ24</accession>